<feature type="signal peptide" evidence="1">
    <location>
        <begin position="1"/>
        <end position="22"/>
    </location>
</feature>
<feature type="chain" id="PRO_0000446718" description="U-scoloptoxin(05)-Cw1a" evidence="3">
    <location>
        <begin position="23"/>
        <end position="118"/>
    </location>
</feature>
<name>TX51A_CORWE</name>
<keyword id="KW-1015">Disulfide bond</keyword>
<keyword id="KW-0964">Secreted</keyword>
<keyword id="KW-0732">Signal</keyword>
<keyword id="KW-0800">Toxin</keyword>
<organism>
    <name type="scientific">Cormocephalus westwoodi</name>
    <name type="common">Westwood's green centipede</name>
    <dbReference type="NCBI Taxonomy" id="1096223"/>
    <lineage>
        <taxon>Eukaryota</taxon>
        <taxon>Metazoa</taxon>
        <taxon>Ecdysozoa</taxon>
        <taxon>Arthropoda</taxon>
        <taxon>Myriapoda</taxon>
        <taxon>Chilopoda</taxon>
        <taxon>Pleurostigmophora</taxon>
        <taxon>Scolopendromorpha</taxon>
        <taxon>Scolopendridae</taxon>
        <taxon>Cormocephalus</taxon>
    </lineage>
</organism>
<accession>P0DPY1</accession>
<comment type="subcellular location">
    <subcellularLocation>
        <location evidence="4">Secreted</location>
    </subcellularLocation>
</comment>
<comment type="tissue specificity">
    <text evidence="4">Expressed by the venom gland.</text>
</comment>
<comment type="PTM">
    <text evidence="3">Contains 5 disulfide bonds.</text>
</comment>
<comment type="miscellaneous">
    <text evidence="3">The scoloptoxin-05 family has remarkable similarities with the three-finger toxin family commonly found in snakes.</text>
</comment>
<comment type="similarity">
    <text evidence="3">Belongs to the scoloptoxin-05 family.</text>
</comment>
<comment type="online information" name="National Center for Biotechnology Information (NCBI)">
    <link uri="https://www.ncbi.nlm.nih.gov/nuccore/GASL01000049"/>
</comment>
<protein>
    <recommendedName>
        <fullName evidence="2">U-scoloptoxin(05)-Cw1a</fullName>
        <shortName evidence="2">U-SLPTX(05)-Cw1a</shortName>
    </recommendedName>
</protein>
<dbReference type="GO" id="GO:0005576">
    <property type="term" value="C:extracellular region"/>
    <property type="evidence" value="ECO:0007669"/>
    <property type="project" value="UniProtKB-SubCell"/>
</dbReference>
<dbReference type="GO" id="GO:0090729">
    <property type="term" value="F:toxin activity"/>
    <property type="evidence" value="ECO:0007669"/>
    <property type="project" value="UniProtKB-KW"/>
</dbReference>
<dbReference type="InterPro" id="IPR045860">
    <property type="entry name" value="Snake_toxin-like_sf"/>
</dbReference>
<dbReference type="SUPFAM" id="SSF57302">
    <property type="entry name" value="Snake toxin-like"/>
    <property type="match status" value="1"/>
</dbReference>
<reference key="1">
    <citation type="journal article" date="2014" name="Mol. Biol. Evol.">
        <title>Clawing through evolution: toxin diversification and convergence in the ancient lineage Chilopoda (centipedes).</title>
        <authorList>
            <person name="Undheim E.A."/>
            <person name="Jones A."/>
            <person name="Clauser K.R."/>
            <person name="Holland J.W."/>
            <person name="Pineda S.S."/>
            <person name="King G.F."/>
            <person name="Fry B.G."/>
        </authorList>
    </citation>
    <scope>NUCLEOTIDE SEQUENCE [MRNA]</scope>
    <scope>NOMENCLATURE</scope>
    <source>
        <tissue>Venom gland</tissue>
    </source>
</reference>
<evidence type="ECO:0000255" key="1"/>
<evidence type="ECO:0000303" key="2">
    <source>
    </source>
</evidence>
<evidence type="ECO:0000305" key="3"/>
<evidence type="ECO:0000305" key="4">
    <source>
    </source>
</evidence>
<proteinExistence type="inferred from homology"/>
<sequence>MNPLNLSTFIVFTLFAASATTALTCFQCTTSEGSDYCVSSFPKPSQCLPLMNYCTKIITTSNGAISVLRSCNVVSLDNTCMETGTGKICSFSCDTDACNAGSQFHCNRFQLPFLLTLF</sequence>